<proteinExistence type="evidence at transcript level"/>
<protein>
    <recommendedName>
        <fullName>Probable aquaporin TIP4-1</fullName>
    </recommendedName>
    <alternativeName>
        <fullName>Tonoplast intrinsic protein 4-1</fullName>
        <shortName>OsTIP4;1</shortName>
    </alternativeName>
</protein>
<gene>
    <name type="primary">TIP4-1</name>
    <name type="ordered locus">Os05g0231700</name>
    <name type="ordered locus">LOC_Os05g14240</name>
    <name type="ORF">OsJ_016926</name>
    <name type="ORF">OSJNBa0042F15.10</name>
</gene>
<feature type="chain" id="PRO_0000064027" description="Probable aquaporin TIP4-1">
    <location>
        <begin position="1"/>
        <end position="251"/>
    </location>
</feature>
<feature type="transmembrane region" description="Helical; Name=1" evidence="2">
    <location>
        <begin position="26"/>
        <end position="46"/>
    </location>
</feature>
<feature type="transmembrane region" description="Helical; Name=2" evidence="2">
    <location>
        <begin position="57"/>
        <end position="77"/>
    </location>
</feature>
<feature type="transmembrane region" description="Helical; Name=3" evidence="2">
    <location>
        <begin position="104"/>
        <end position="124"/>
    </location>
</feature>
<feature type="transmembrane region" description="Helical; Name=4" evidence="2">
    <location>
        <begin position="144"/>
        <end position="164"/>
    </location>
</feature>
<feature type="transmembrane region" description="Helical; Name=5" evidence="2">
    <location>
        <begin position="170"/>
        <end position="190"/>
    </location>
</feature>
<feature type="transmembrane region" description="Helical; Name=6" evidence="2">
    <location>
        <begin position="219"/>
        <end position="239"/>
    </location>
</feature>
<feature type="short sequence motif" description="NPA 1">
    <location>
        <begin position="85"/>
        <end position="87"/>
    </location>
</feature>
<feature type="short sequence motif" description="NPA 2">
    <location>
        <begin position="198"/>
        <end position="200"/>
    </location>
</feature>
<feature type="sequence conflict" description="In Ref. 6; AK060193." evidence="4" ref="6">
    <original>F</original>
    <variation>L</variation>
    <location>
        <position position="173"/>
    </location>
</feature>
<organism>
    <name type="scientific">Oryza sativa subsp. japonica</name>
    <name type="common">Rice</name>
    <dbReference type="NCBI Taxonomy" id="39947"/>
    <lineage>
        <taxon>Eukaryota</taxon>
        <taxon>Viridiplantae</taxon>
        <taxon>Streptophyta</taxon>
        <taxon>Embryophyta</taxon>
        <taxon>Tracheophyta</taxon>
        <taxon>Spermatophyta</taxon>
        <taxon>Magnoliopsida</taxon>
        <taxon>Liliopsida</taxon>
        <taxon>Poales</taxon>
        <taxon>Poaceae</taxon>
        <taxon>BOP clade</taxon>
        <taxon>Oryzoideae</taxon>
        <taxon>Oryzeae</taxon>
        <taxon>Oryzinae</taxon>
        <taxon>Oryza</taxon>
        <taxon>Oryza sativa</taxon>
    </lineage>
</organism>
<dbReference type="EMBL" id="AC145396">
    <property type="protein sequence ID" value="AAS98488.1"/>
    <property type="molecule type" value="Genomic_DNA"/>
</dbReference>
<dbReference type="EMBL" id="AP008211">
    <property type="protein sequence ID" value="BAF16893.1"/>
    <property type="molecule type" value="Genomic_DNA"/>
</dbReference>
<dbReference type="EMBL" id="AP014961">
    <property type="status" value="NOT_ANNOTATED_CDS"/>
    <property type="molecule type" value="Genomic_DNA"/>
</dbReference>
<dbReference type="EMBL" id="CM000142">
    <property type="protein sequence ID" value="EAZ33443.1"/>
    <property type="molecule type" value="Genomic_DNA"/>
</dbReference>
<dbReference type="EMBL" id="AK060193">
    <property type="status" value="NOT_ANNOTATED_CDS"/>
    <property type="molecule type" value="mRNA"/>
</dbReference>
<dbReference type="RefSeq" id="XP_015640527.1">
    <property type="nucleotide sequence ID" value="XM_015785041.1"/>
</dbReference>
<dbReference type="SMR" id="Q75GA5"/>
<dbReference type="FunCoup" id="Q75GA5">
    <property type="interactions" value="697"/>
</dbReference>
<dbReference type="STRING" id="39947.Q75GA5"/>
<dbReference type="PaxDb" id="39947-Q75GA5"/>
<dbReference type="KEGG" id="dosa:Os05g0231700"/>
<dbReference type="eggNOG" id="KOG0223">
    <property type="taxonomic scope" value="Eukaryota"/>
</dbReference>
<dbReference type="HOGENOM" id="CLU_020019_3_4_1"/>
<dbReference type="InParanoid" id="Q75GA5"/>
<dbReference type="OrthoDB" id="3222at2759"/>
<dbReference type="Proteomes" id="UP000000763">
    <property type="component" value="Chromosome 5"/>
</dbReference>
<dbReference type="Proteomes" id="UP000007752">
    <property type="component" value="Chromosome 5"/>
</dbReference>
<dbReference type="Proteomes" id="UP000059680">
    <property type="component" value="Chromosome 5"/>
</dbReference>
<dbReference type="GO" id="GO:0016020">
    <property type="term" value="C:membrane"/>
    <property type="evidence" value="ECO:0000318"/>
    <property type="project" value="GO_Central"/>
</dbReference>
<dbReference type="GO" id="GO:0005774">
    <property type="term" value="C:vacuolar membrane"/>
    <property type="evidence" value="ECO:0007669"/>
    <property type="project" value="UniProtKB-SubCell"/>
</dbReference>
<dbReference type="GO" id="GO:0015250">
    <property type="term" value="F:water channel activity"/>
    <property type="evidence" value="ECO:0000318"/>
    <property type="project" value="GO_Central"/>
</dbReference>
<dbReference type="GO" id="GO:0006833">
    <property type="term" value="P:water transport"/>
    <property type="evidence" value="ECO:0000318"/>
    <property type="project" value="GO_Central"/>
</dbReference>
<dbReference type="FunFam" id="1.20.1080.10:FF:000002">
    <property type="entry name" value="Probable aquaporin TIP1-1"/>
    <property type="match status" value="1"/>
</dbReference>
<dbReference type="Gene3D" id="1.20.1080.10">
    <property type="entry name" value="Glycerol uptake facilitator protein"/>
    <property type="match status" value="1"/>
</dbReference>
<dbReference type="InterPro" id="IPR023271">
    <property type="entry name" value="Aquaporin-like"/>
</dbReference>
<dbReference type="InterPro" id="IPR034294">
    <property type="entry name" value="Aquaporin_transptr"/>
</dbReference>
<dbReference type="InterPro" id="IPR000425">
    <property type="entry name" value="MIP"/>
</dbReference>
<dbReference type="InterPro" id="IPR022357">
    <property type="entry name" value="MIP_CS"/>
</dbReference>
<dbReference type="PANTHER" id="PTHR45665:SF13">
    <property type="entry name" value="AQUAPORIN TIP4-1-RELATED"/>
    <property type="match status" value="1"/>
</dbReference>
<dbReference type="PANTHER" id="PTHR45665">
    <property type="entry name" value="AQUAPORIN-8"/>
    <property type="match status" value="1"/>
</dbReference>
<dbReference type="Pfam" id="PF00230">
    <property type="entry name" value="MIP"/>
    <property type="match status" value="1"/>
</dbReference>
<dbReference type="PRINTS" id="PR00783">
    <property type="entry name" value="MINTRINSICP"/>
</dbReference>
<dbReference type="SUPFAM" id="SSF81338">
    <property type="entry name" value="Aquaporin-like"/>
    <property type="match status" value="1"/>
</dbReference>
<dbReference type="PROSITE" id="PS00221">
    <property type="entry name" value="MIP"/>
    <property type="match status" value="1"/>
</dbReference>
<comment type="function">
    <text evidence="1">Aquaporins facilitate the transport of water and small neutral solutes across cell membranes. May be involved in transport from the vacuolar compartment to the cytoplasm (By similarity).</text>
</comment>
<comment type="subcellular location">
    <subcellularLocation>
        <location evidence="1">Vacuole membrane</location>
        <topology evidence="1">Multi-pass membrane protein</topology>
    </subcellularLocation>
    <text>Tonoplast.</text>
</comment>
<comment type="tissue specificity">
    <text evidence="3">Expressed in roots, leaves and anthers.</text>
</comment>
<comment type="domain">
    <text>Aquaporins contain two tandem repeats each containing three membrane-spanning domains and a pore-forming loop with the signature motif Asn-Pro-Ala (NPA).</text>
</comment>
<comment type="similarity">
    <text evidence="4">Belongs to the MIP/aquaporin (TC 1.A.8) family. TIP (TC 1.A.8.10) subfamily.</text>
</comment>
<accession>Q75GA5</accession>
<accession>Q0DJT0</accession>
<evidence type="ECO:0000250" key="1"/>
<evidence type="ECO:0000255" key="2"/>
<evidence type="ECO:0000269" key="3">
    <source>
    </source>
</evidence>
<evidence type="ECO:0000305" key="4"/>
<name>TIP41_ORYSJ</name>
<reference key="1">
    <citation type="journal article" date="2005" name="Mol. Genet. Genomics">
        <title>A fine physical map of the rice chromosome 5.</title>
        <authorList>
            <person name="Cheng C.-H."/>
            <person name="Chung M.C."/>
            <person name="Liu S.-M."/>
            <person name="Chen S.-K."/>
            <person name="Kao F.Y."/>
            <person name="Lin S.-J."/>
            <person name="Hsiao S.-H."/>
            <person name="Tseng I.C."/>
            <person name="Hsing Y.-I.C."/>
            <person name="Wu H.-P."/>
            <person name="Chen C.-S."/>
            <person name="Shaw J.-F."/>
            <person name="Wu J."/>
            <person name="Matsumoto T."/>
            <person name="Sasaki T."/>
            <person name="Chen H.-C."/>
            <person name="Chow T.-Y."/>
        </authorList>
    </citation>
    <scope>NUCLEOTIDE SEQUENCE [LARGE SCALE GENOMIC DNA]</scope>
    <source>
        <strain>cv. Nipponbare</strain>
    </source>
</reference>
<reference key="2">
    <citation type="journal article" date="2005" name="Nature">
        <title>The map-based sequence of the rice genome.</title>
        <authorList>
            <consortium name="International rice genome sequencing project (IRGSP)"/>
        </authorList>
    </citation>
    <scope>NUCLEOTIDE SEQUENCE [LARGE SCALE GENOMIC DNA]</scope>
    <source>
        <strain>cv. Nipponbare</strain>
    </source>
</reference>
<reference key="3">
    <citation type="journal article" date="2008" name="Nucleic Acids Res.">
        <title>The rice annotation project database (RAP-DB): 2008 update.</title>
        <authorList>
            <consortium name="The rice annotation project (RAP)"/>
        </authorList>
    </citation>
    <scope>GENOME REANNOTATION</scope>
    <source>
        <strain>cv. Nipponbare</strain>
    </source>
</reference>
<reference key="4">
    <citation type="journal article" date="2013" name="Rice">
        <title>Improvement of the Oryza sativa Nipponbare reference genome using next generation sequence and optical map data.</title>
        <authorList>
            <person name="Kawahara Y."/>
            <person name="de la Bastide M."/>
            <person name="Hamilton J.P."/>
            <person name="Kanamori H."/>
            <person name="McCombie W.R."/>
            <person name="Ouyang S."/>
            <person name="Schwartz D.C."/>
            <person name="Tanaka T."/>
            <person name="Wu J."/>
            <person name="Zhou S."/>
            <person name="Childs K.L."/>
            <person name="Davidson R.M."/>
            <person name="Lin H."/>
            <person name="Quesada-Ocampo L."/>
            <person name="Vaillancourt B."/>
            <person name="Sakai H."/>
            <person name="Lee S.S."/>
            <person name="Kim J."/>
            <person name="Numa H."/>
            <person name="Itoh T."/>
            <person name="Buell C.R."/>
            <person name="Matsumoto T."/>
        </authorList>
    </citation>
    <scope>GENOME REANNOTATION</scope>
    <source>
        <strain>cv. Nipponbare</strain>
    </source>
</reference>
<reference key="5">
    <citation type="journal article" date="2005" name="PLoS Biol.">
        <title>The genomes of Oryza sativa: a history of duplications.</title>
        <authorList>
            <person name="Yu J."/>
            <person name="Wang J."/>
            <person name="Lin W."/>
            <person name="Li S."/>
            <person name="Li H."/>
            <person name="Zhou J."/>
            <person name="Ni P."/>
            <person name="Dong W."/>
            <person name="Hu S."/>
            <person name="Zeng C."/>
            <person name="Zhang J."/>
            <person name="Zhang Y."/>
            <person name="Li R."/>
            <person name="Xu Z."/>
            <person name="Li S."/>
            <person name="Li X."/>
            <person name="Zheng H."/>
            <person name="Cong L."/>
            <person name="Lin L."/>
            <person name="Yin J."/>
            <person name="Geng J."/>
            <person name="Li G."/>
            <person name="Shi J."/>
            <person name="Liu J."/>
            <person name="Lv H."/>
            <person name="Li J."/>
            <person name="Wang J."/>
            <person name="Deng Y."/>
            <person name="Ran L."/>
            <person name="Shi X."/>
            <person name="Wang X."/>
            <person name="Wu Q."/>
            <person name="Li C."/>
            <person name="Ren X."/>
            <person name="Wang J."/>
            <person name="Wang X."/>
            <person name="Li D."/>
            <person name="Liu D."/>
            <person name="Zhang X."/>
            <person name="Ji Z."/>
            <person name="Zhao W."/>
            <person name="Sun Y."/>
            <person name="Zhang Z."/>
            <person name="Bao J."/>
            <person name="Han Y."/>
            <person name="Dong L."/>
            <person name="Ji J."/>
            <person name="Chen P."/>
            <person name="Wu S."/>
            <person name="Liu J."/>
            <person name="Xiao Y."/>
            <person name="Bu D."/>
            <person name="Tan J."/>
            <person name="Yang L."/>
            <person name="Ye C."/>
            <person name="Zhang J."/>
            <person name="Xu J."/>
            <person name="Zhou Y."/>
            <person name="Yu Y."/>
            <person name="Zhang B."/>
            <person name="Zhuang S."/>
            <person name="Wei H."/>
            <person name="Liu B."/>
            <person name="Lei M."/>
            <person name="Yu H."/>
            <person name="Li Y."/>
            <person name="Xu H."/>
            <person name="Wei S."/>
            <person name="He X."/>
            <person name="Fang L."/>
            <person name="Zhang Z."/>
            <person name="Zhang Y."/>
            <person name="Huang X."/>
            <person name="Su Z."/>
            <person name="Tong W."/>
            <person name="Li J."/>
            <person name="Tong Z."/>
            <person name="Li S."/>
            <person name="Ye J."/>
            <person name="Wang L."/>
            <person name="Fang L."/>
            <person name="Lei T."/>
            <person name="Chen C.-S."/>
            <person name="Chen H.-C."/>
            <person name="Xu Z."/>
            <person name="Li H."/>
            <person name="Huang H."/>
            <person name="Zhang F."/>
            <person name="Xu H."/>
            <person name="Li N."/>
            <person name="Zhao C."/>
            <person name="Li S."/>
            <person name="Dong L."/>
            <person name="Huang Y."/>
            <person name="Li L."/>
            <person name="Xi Y."/>
            <person name="Qi Q."/>
            <person name="Li W."/>
            <person name="Zhang B."/>
            <person name="Hu W."/>
            <person name="Zhang Y."/>
            <person name="Tian X."/>
            <person name="Jiao Y."/>
            <person name="Liang X."/>
            <person name="Jin J."/>
            <person name="Gao L."/>
            <person name="Zheng W."/>
            <person name="Hao B."/>
            <person name="Liu S.-M."/>
            <person name="Wang W."/>
            <person name="Yuan L."/>
            <person name="Cao M."/>
            <person name="McDermott J."/>
            <person name="Samudrala R."/>
            <person name="Wang J."/>
            <person name="Wong G.K.-S."/>
            <person name="Yang H."/>
        </authorList>
    </citation>
    <scope>NUCLEOTIDE SEQUENCE [LARGE SCALE GENOMIC DNA]</scope>
    <source>
        <strain>cv. Nipponbare</strain>
    </source>
</reference>
<reference key="6">
    <citation type="journal article" date="2003" name="Science">
        <title>Collection, mapping, and annotation of over 28,000 cDNA clones from japonica rice.</title>
        <authorList>
            <consortium name="The rice full-length cDNA consortium"/>
        </authorList>
    </citation>
    <scope>NUCLEOTIDE SEQUENCE [LARGE SCALE MRNA]</scope>
    <source>
        <strain>cv. Nipponbare</strain>
    </source>
</reference>
<reference key="7">
    <citation type="journal article" date="2005" name="Plant Cell Physiol.">
        <title>Identification of 33 rice aquaporin genes and analysis of their expression and function.</title>
        <authorList>
            <person name="Sakurai J."/>
            <person name="Ishikawa F."/>
            <person name="Yamaguchi T."/>
            <person name="Uemura M."/>
            <person name="Maeshima M."/>
        </authorList>
    </citation>
    <scope>NOMENCLATURE</scope>
    <scope>TISSUE SPECIFICITY</scope>
</reference>
<keyword id="KW-0472">Membrane</keyword>
<keyword id="KW-1185">Reference proteome</keyword>
<keyword id="KW-0677">Repeat</keyword>
<keyword id="KW-0812">Transmembrane</keyword>
<keyword id="KW-1133">Transmembrane helix</keyword>
<keyword id="KW-0813">Transport</keyword>
<keyword id="KW-0926">Vacuole</keyword>
<sequence length="251" mass="25662">MAKEVDPCDHGEVVDAGCVRAVLAELVLTFVFVFTGVAATMAAGVPEVAGAAMPMAALAGVAIATALAAGVLVTAGFHVSGGHLNPAVTVALLARGHITAFRSALYVAAQLLASSLACILLRYLTGGMATPVHTLGSGIGPMQGLVMEIILTFSLLFVVYATILDPRSSVPGFGPLLTGLIVGANTIAGGNFSGASMNPARSFGPALATGVWTHHWIYWLGPLIGGPLAGLVYESLFLVKRTHEPLLDNSF</sequence>